<evidence type="ECO:0000250" key="1"/>
<evidence type="ECO:0000255" key="2"/>
<evidence type="ECO:0000269" key="3">
    <source>
    </source>
</evidence>
<evidence type="ECO:0000269" key="4">
    <source>
    </source>
</evidence>
<evidence type="ECO:0000305" key="5"/>
<evidence type="ECO:0000305" key="6">
    <source>
    </source>
</evidence>
<organism>
    <name type="scientific">Arabidopsis thaliana</name>
    <name type="common">Mouse-ear cress</name>
    <dbReference type="NCBI Taxonomy" id="3702"/>
    <lineage>
        <taxon>Eukaryota</taxon>
        <taxon>Viridiplantae</taxon>
        <taxon>Streptophyta</taxon>
        <taxon>Embryophyta</taxon>
        <taxon>Tracheophyta</taxon>
        <taxon>Spermatophyta</taxon>
        <taxon>Magnoliopsida</taxon>
        <taxon>eudicotyledons</taxon>
        <taxon>Gunneridae</taxon>
        <taxon>Pentapetalae</taxon>
        <taxon>rosids</taxon>
        <taxon>malvids</taxon>
        <taxon>Brassicales</taxon>
        <taxon>Brassicaceae</taxon>
        <taxon>Camelineae</taxon>
        <taxon>Arabidopsis</taxon>
    </lineage>
</organism>
<keyword id="KW-1003">Cell membrane</keyword>
<keyword id="KW-0472">Membrane</keyword>
<keyword id="KW-1185">Reference proteome</keyword>
<keyword id="KW-0769">Symport</keyword>
<keyword id="KW-0812">Transmembrane</keyword>
<keyword id="KW-1133">Transmembrane helix</keyword>
<keyword id="KW-0813">Transport</keyword>
<sequence>MATCPPFDFSTKYYDGDGGCQRQSSFFGGTTVLDQGVGYAVILGFGAFFAVFTSFLVWLEKRYVGARHTSEWFNTAGRNVKTGLIASVIVSQWTWAATILQSSNVAWQYGVSGPFWYASGATIQVLLFGVMAIEIKRKAPNAHTVCEIVKARWGTATHIVFLVFCLATNVVVTAMLLLGGSAVVNALTGVNLYAASFLIPLGVVVYTLAGGLKATFLASYVHSVIVHVALVVFVFLVYTSSKELGSPSVVYDRLKDMVAKSRSCTEPLSHHGQACGPVDGNFRGSYLTMLSSGGAVFGLINIVGNFGTVFVDNGYWVSAIAARPSSTHKGYLLGGLVWFAVPFSLATSLGLGALALDLPISKDEADRGLVPPATAIALMGKSGSLLLLTMLFMAVTSAGSSELIAVSSLFTYDIYRTYINPRATGRQILKISRCAVLGFGCFMGILAVVLNKAGVSLGWMYLAMGVLIGSAVIPIAFMLLWSKANAFGAILGATSGCVFGIITWLTTAKTQYGRVDLDSTGKNGPMLAGNLVAILTGGLIHAVCSLVRPQNYDWSTTREIKVVEAYASGDEDVDVPAEELREEKLRRAKAWIVKWGLVFTILIVVIWPVLSLPARVFSRGYFWFWAIVAIAWGTIGSIVIIGLPLVESWDTIKSVCMGMFTNDRVMKKLDDLNHRLRALTMAVPEAEKIYLLELEKTKKNDEEG</sequence>
<proteinExistence type="evidence at protein level"/>
<comment type="function">
    <text evidence="3 4">High-affinity urea-proton symporter involved in the active transport of urea across the plasma membrane into root cells. May play an important role in urea uptake by plant cells at low external urea concentrations.</text>
</comment>
<comment type="biophysicochemical properties">
    <kinetics>
        <KM evidence="3 4">3 uM for urea (at pH 5.0)</KM>
    </kinetics>
</comment>
<comment type="subcellular location">
    <subcellularLocation>
        <location evidence="1">Cell membrane</location>
        <topology evidence="1">Multi-pass membrane protein</topology>
    </subcellularLocation>
</comment>
<comment type="tissue specificity">
    <text evidence="3 4">Expressed in root rhizodermis, including root hairs and cortex in more basal root zones. Expressed in shoots.</text>
</comment>
<comment type="induction">
    <text evidence="3 4">By nitrogen deficiency in roots.</text>
</comment>
<comment type="disruption phenotype">
    <text evidence="4">No visible phenotype under normal growth conditions, but when grown with urea as a sole source of nitrogen, plants are chlorotic and accumulate increased levels of anthocyanin.</text>
</comment>
<comment type="miscellaneous">
    <text evidence="6">The urease inhibitor phenylphosphorodiamidate (PPD) has no effect on urea uptake and translocation or DUR3 gene expression.</text>
</comment>
<comment type="similarity">
    <text evidence="5">Belongs to the sodium:solute symporter (SSF) (TC 2.A.21) family.</text>
</comment>
<comment type="sequence caution" evidence="5">
    <conflict type="erroneous gene model prediction">
        <sequence resource="EMBL-CDS" id="BAB09166"/>
    </conflict>
</comment>
<dbReference type="EMBL" id="AB018113">
    <property type="protein sequence ID" value="BAB09166.1"/>
    <property type="status" value="ALT_SEQ"/>
    <property type="molecule type" value="Genomic_DNA"/>
</dbReference>
<dbReference type="EMBL" id="CP002688">
    <property type="protein sequence ID" value="AED95242.1"/>
    <property type="molecule type" value="Genomic_DNA"/>
</dbReference>
<dbReference type="RefSeq" id="NP_199351.2">
    <property type="nucleotide sequence ID" value="NM_123906.5"/>
</dbReference>
<dbReference type="SMR" id="F4KD71"/>
<dbReference type="FunCoup" id="F4KD71">
    <property type="interactions" value="255"/>
</dbReference>
<dbReference type="STRING" id="3702.F4KD71"/>
<dbReference type="TCDB" id="2.A.21.6.2">
    <property type="family name" value="the solute:sodium symporter (sss) family"/>
</dbReference>
<dbReference type="iPTMnet" id="F4KD71"/>
<dbReference type="PaxDb" id="3702-AT5G45380.1"/>
<dbReference type="ProteomicsDB" id="222190"/>
<dbReference type="EnsemblPlants" id="AT5G45380.1">
    <property type="protein sequence ID" value="AT5G45380.1"/>
    <property type="gene ID" value="AT5G45380"/>
</dbReference>
<dbReference type="GeneID" id="834574"/>
<dbReference type="Gramene" id="AT5G45380.1">
    <property type="protein sequence ID" value="AT5G45380.1"/>
    <property type="gene ID" value="AT5G45380"/>
</dbReference>
<dbReference type="KEGG" id="ath:AT5G45380"/>
<dbReference type="Araport" id="AT5G45380"/>
<dbReference type="TAIR" id="AT5G45380">
    <property type="gene designation" value="DUR3"/>
</dbReference>
<dbReference type="eggNOG" id="KOG2348">
    <property type="taxonomic scope" value="Eukaryota"/>
</dbReference>
<dbReference type="HOGENOM" id="CLU_010778_2_1_1"/>
<dbReference type="InParanoid" id="F4KD71"/>
<dbReference type="OMA" id="LGANWLT"/>
<dbReference type="OrthoDB" id="6132759at2759"/>
<dbReference type="SABIO-RK" id="F4KD71"/>
<dbReference type="PRO" id="PR:F4KD71"/>
<dbReference type="Proteomes" id="UP000006548">
    <property type="component" value="Chromosome 5"/>
</dbReference>
<dbReference type="ExpressionAtlas" id="F4KD71">
    <property type="expression patterns" value="baseline and differential"/>
</dbReference>
<dbReference type="GO" id="GO:0005886">
    <property type="term" value="C:plasma membrane"/>
    <property type="evidence" value="ECO:0000314"/>
    <property type="project" value="TAIR"/>
</dbReference>
<dbReference type="GO" id="GO:0015293">
    <property type="term" value="F:symporter activity"/>
    <property type="evidence" value="ECO:0007669"/>
    <property type="project" value="UniProtKB-KW"/>
</dbReference>
<dbReference type="GO" id="GO:0015204">
    <property type="term" value="F:urea transmembrane transporter activity"/>
    <property type="evidence" value="ECO:0000314"/>
    <property type="project" value="UniProtKB"/>
</dbReference>
<dbReference type="GO" id="GO:0006995">
    <property type="term" value="P:cellular response to nitrogen starvation"/>
    <property type="evidence" value="ECO:0000270"/>
    <property type="project" value="TAIR"/>
</dbReference>
<dbReference type="GO" id="GO:0071918">
    <property type="term" value="P:urea transmembrane transport"/>
    <property type="evidence" value="ECO:0000314"/>
    <property type="project" value="UniProtKB"/>
</dbReference>
<dbReference type="CDD" id="cd11476">
    <property type="entry name" value="SLC5sbd_DUR3"/>
    <property type="match status" value="1"/>
</dbReference>
<dbReference type="FunFam" id="1.20.1730.10:FF:000006">
    <property type="entry name" value="Urea active transporter"/>
    <property type="match status" value="1"/>
</dbReference>
<dbReference type="Gene3D" id="1.20.1730.10">
    <property type="entry name" value="Sodium/glucose cotransporter"/>
    <property type="match status" value="1"/>
</dbReference>
<dbReference type="InterPro" id="IPR031155">
    <property type="entry name" value="DUR"/>
</dbReference>
<dbReference type="InterPro" id="IPR038377">
    <property type="entry name" value="Na/Glc_symporter_sf"/>
</dbReference>
<dbReference type="InterPro" id="IPR001734">
    <property type="entry name" value="Na/solute_symporter"/>
</dbReference>
<dbReference type="NCBIfam" id="TIGR00813">
    <property type="entry name" value="sss"/>
    <property type="match status" value="1"/>
</dbReference>
<dbReference type="PANTHER" id="PTHR46154">
    <property type="match status" value="1"/>
</dbReference>
<dbReference type="PANTHER" id="PTHR46154:SF4">
    <property type="entry name" value="UREA ACTIVE TRANSPORTER"/>
    <property type="match status" value="1"/>
</dbReference>
<dbReference type="Pfam" id="PF00474">
    <property type="entry name" value="SSF"/>
    <property type="match status" value="1"/>
</dbReference>
<dbReference type="PROSITE" id="PS50283">
    <property type="entry name" value="NA_SOLUT_SYMP_3"/>
    <property type="match status" value="1"/>
</dbReference>
<reference key="1">
    <citation type="journal article" date="1999" name="DNA Res.">
        <title>Structural analysis of Arabidopsis thaliana chromosome 5. IX. Sequence features of the regions of 1,011,550 bp covered by seventeen P1 and TAC clones.</title>
        <authorList>
            <person name="Kaneko T."/>
            <person name="Katoh T."/>
            <person name="Sato S."/>
            <person name="Nakamura Y."/>
            <person name="Asamizu E."/>
            <person name="Kotani H."/>
            <person name="Miyajima N."/>
            <person name="Tabata S."/>
        </authorList>
    </citation>
    <scope>NUCLEOTIDE SEQUENCE [LARGE SCALE GENOMIC DNA]</scope>
    <source>
        <strain>cv. Columbia</strain>
    </source>
</reference>
<reference key="2">
    <citation type="journal article" date="2017" name="Plant J.">
        <title>Araport11: a complete reannotation of the Arabidopsis thaliana reference genome.</title>
        <authorList>
            <person name="Cheng C.Y."/>
            <person name="Krishnakumar V."/>
            <person name="Chan A.P."/>
            <person name="Thibaud-Nissen F."/>
            <person name="Schobel S."/>
            <person name="Town C.D."/>
        </authorList>
    </citation>
    <scope>GENOME REANNOTATION</scope>
    <source>
        <strain>cv. Columbia</strain>
    </source>
</reference>
<reference key="3">
    <citation type="journal article" date="2003" name="Plant Cell">
        <title>AtDUR3 encodes a new type of high-affinity urea/H+ symporter in Arabidopsis.</title>
        <authorList>
            <person name="Liu L.H."/>
            <person name="Ludewig U."/>
            <person name="Frommer W.B."/>
            <person name="von Wiren N."/>
        </authorList>
    </citation>
    <scope>FUNCTION</scope>
    <scope>BIOPHYSICOCHEMICAL PROPERTIES</scope>
    <scope>TISSUE SPECIFICITY</scope>
    <scope>INDUCTION</scope>
</reference>
<reference key="4">
    <citation type="journal article" date="2007" name="Biochem. Biophys. Res. Commun.">
        <title>Novel subsets of the Arabidopsis plasmalemma phosphoproteome identify phosphorylation sites in secondary active transporters.</title>
        <authorList>
            <person name="Hem S."/>
            <person name="Rofidal V."/>
            <person name="Sommerer N."/>
            <person name="Rossignol M."/>
        </authorList>
    </citation>
    <scope>IDENTIFICATION BY MASS SPECTROMETRY [LARGE SCALE ANALYSIS]</scope>
</reference>
<reference key="5">
    <citation type="journal article" date="2007" name="Plant J.">
        <title>AtDUR3 represents the major transporter for high-affinity urea transport across the plasma membrane of nitrogen-deficient Arabidopsis roots.</title>
        <authorList>
            <person name="Kojima S."/>
            <person name="Bohner A."/>
            <person name="Gassert B."/>
            <person name="Yuan L."/>
            <person name="von Wiren N."/>
        </authorList>
    </citation>
    <scope>FUNCTION</scope>
    <scope>BIOPHYSICOCHEMICAL PROPERTIES</scope>
    <scope>SUBCELLULAR LOCATION</scope>
    <scope>TISSUE SPECIFICITY</scope>
    <scope>INDUCTION</scope>
    <scope>DISRUPTION PHENOTYPE</scope>
</reference>
<gene>
    <name type="primary">DUR3</name>
    <name type="ordered locus">At5g45380</name>
    <name type="ORF">MFC19.5</name>
</gene>
<feature type="chain" id="PRO_0000418600" description="Urea-proton symporter DUR3">
    <location>
        <begin position="1"/>
        <end position="704"/>
    </location>
</feature>
<feature type="transmembrane region" description="Helical" evidence="2">
    <location>
        <begin position="39"/>
        <end position="59"/>
    </location>
</feature>
<feature type="transmembrane region" description="Helical" evidence="2">
    <location>
        <begin position="80"/>
        <end position="100"/>
    </location>
</feature>
<feature type="transmembrane region" description="Helical" evidence="2">
    <location>
        <begin position="115"/>
        <end position="135"/>
    </location>
</feature>
<feature type="transmembrane region" description="Helical" evidence="2">
    <location>
        <begin position="159"/>
        <end position="179"/>
    </location>
</feature>
<feature type="transmembrane region" description="Helical" evidence="2">
    <location>
        <begin position="192"/>
        <end position="212"/>
    </location>
</feature>
<feature type="transmembrane region" description="Helical" evidence="2">
    <location>
        <begin position="216"/>
        <end position="236"/>
    </location>
</feature>
<feature type="transmembrane region" description="Helical" evidence="2">
    <location>
        <begin position="291"/>
        <end position="311"/>
    </location>
</feature>
<feature type="transmembrane region" description="Helical" evidence="2">
    <location>
        <begin position="336"/>
        <end position="356"/>
    </location>
</feature>
<feature type="transmembrane region" description="Helical" evidence="2">
    <location>
        <begin position="388"/>
        <end position="408"/>
    </location>
</feature>
<feature type="transmembrane region" description="Helical" evidence="2">
    <location>
        <begin position="435"/>
        <end position="455"/>
    </location>
</feature>
<feature type="transmembrane region" description="Helical" evidence="2">
    <location>
        <begin position="461"/>
        <end position="481"/>
    </location>
</feature>
<feature type="transmembrane region" description="Helical" evidence="2">
    <location>
        <begin position="486"/>
        <end position="506"/>
    </location>
</feature>
<feature type="transmembrane region" description="Helical" evidence="2">
    <location>
        <begin position="527"/>
        <end position="547"/>
    </location>
</feature>
<feature type="transmembrane region" description="Helical" evidence="2">
    <location>
        <begin position="590"/>
        <end position="610"/>
    </location>
</feature>
<feature type="transmembrane region" description="Helical" evidence="2">
    <location>
        <begin position="622"/>
        <end position="642"/>
    </location>
</feature>
<accession>F4KD71</accession>
<accession>Q9FHJ8</accession>
<name>DUR3_ARATH</name>
<protein>
    <recommendedName>
        <fullName>Urea-proton symporter DUR3</fullName>
        <shortName>AtDUR3</shortName>
    </recommendedName>
    <alternativeName>
        <fullName>High-affinity urea active transporter DUR3</fullName>
    </alternativeName>
</protein>